<keyword id="KW-0068">Autocatalytic cleavage</keyword>
<keyword id="KW-0963">Cytoplasm</keyword>
<keyword id="KW-0210">Decarboxylase</keyword>
<keyword id="KW-0456">Lyase</keyword>
<keyword id="KW-0566">Pantothenate biosynthesis</keyword>
<keyword id="KW-0670">Pyruvate</keyword>
<keyword id="KW-0704">Schiff base</keyword>
<keyword id="KW-0865">Zymogen</keyword>
<reference key="1">
    <citation type="submission" date="2009-07" db="EMBL/GenBank/DDBJ databases">
        <title>Complete sequence of Geobacter sp. M21.</title>
        <authorList>
            <consortium name="US DOE Joint Genome Institute"/>
            <person name="Lucas S."/>
            <person name="Copeland A."/>
            <person name="Lapidus A."/>
            <person name="Glavina del Rio T."/>
            <person name="Dalin E."/>
            <person name="Tice H."/>
            <person name="Bruce D."/>
            <person name="Goodwin L."/>
            <person name="Pitluck S."/>
            <person name="Saunders E."/>
            <person name="Brettin T."/>
            <person name="Detter J.C."/>
            <person name="Han C."/>
            <person name="Larimer F."/>
            <person name="Land M."/>
            <person name="Hauser L."/>
            <person name="Kyrpides N."/>
            <person name="Ovchinnikova G."/>
            <person name="Lovley D."/>
        </authorList>
    </citation>
    <scope>NUCLEOTIDE SEQUENCE [LARGE SCALE GENOMIC DNA]</scope>
    <source>
        <strain>M21</strain>
    </source>
</reference>
<evidence type="ECO:0000255" key="1">
    <source>
        <dbReference type="HAMAP-Rule" id="MF_00446"/>
    </source>
</evidence>
<proteinExistence type="inferred from homology"/>
<dbReference type="EC" id="4.1.1.11" evidence="1"/>
<dbReference type="EMBL" id="CP001661">
    <property type="protein sequence ID" value="ACT17301.1"/>
    <property type="molecule type" value="Genomic_DNA"/>
</dbReference>
<dbReference type="SMR" id="C6E3N6"/>
<dbReference type="STRING" id="443144.GM21_1240"/>
<dbReference type="KEGG" id="gem:GM21_1240"/>
<dbReference type="eggNOG" id="COG0853">
    <property type="taxonomic scope" value="Bacteria"/>
</dbReference>
<dbReference type="HOGENOM" id="CLU_115305_2_0_7"/>
<dbReference type="OrthoDB" id="9803983at2"/>
<dbReference type="UniPathway" id="UPA00028">
    <property type="reaction ID" value="UER00002"/>
</dbReference>
<dbReference type="GO" id="GO:0005829">
    <property type="term" value="C:cytosol"/>
    <property type="evidence" value="ECO:0007669"/>
    <property type="project" value="TreeGrafter"/>
</dbReference>
<dbReference type="GO" id="GO:0004068">
    <property type="term" value="F:aspartate 1-decarboxylase activity"/>
    <property type="evidence" value="ECO:0007669"/>
    <property type="project" value="UniProtKB-UniRule"/>
</dbReference>
<dbReference type="GO" id="GO:0006523">
    <property type="term" value="P:alanine biosynthetic process"/>
    <property type="evidence" value="ECO:0007669"/>
    <property type="project" value="InterPro"/>
</dbReference>
<dbReference type="GO" id="GO:0015940">
    <property type="term" value="P:pantothenate biosynthetic process"/>
    <property type="evidence" value="ECO:0007669"/>
    <property type="project" value="UniProtKB-UniRule"/>
</dbReference>
<dbReference type="CDD" id="cd06919">
    <property type="entry name" value="Asp_decarbox"/>
    <property type="match status" value="1"/>
</dbReference>
<dbReference type="Gene3D" id="2.40.40.20">
    <property type="match status" value="1"/>
</dbReference>
<dbReference type="HAMAP" id="MF_00446">
    <property type="entry name" value="PanD"/>
    <property type="match status" value="1"/>
</dbReference>
<dbReference type="InterPro" id="IPR009010">
    <property type="entry name" value="Asp_de-COase-like_dom_sf"/>
</dbReference>
<dbReference type="InterPro" id="IPR003190">
    <property type="entry name" value="Asp_decarbox"/>
</dbReference>
<dbReference type="NCBIfam" id="TIGR00223">
    <property type="entry name" value="panD"/>
    <property type="match status" value="1"/>
</dbReference>
<dbReference type="PANTHER" id="PTHR21012">
    <property type="entry name" value="ASPARTATE 1-DECARBOXYLASE"/>
    <property type="match status" value="1"/>
</dbReference>
<dbReference type="PANTHER" id="PTHR21012:SF0">
    <property type="entry name" value="ASPARTATE 1-DECARBOXYLASE"/>
    <property type="match status" value="1"/>
</dbReference>
<dbReference type="Pfam" id="PF02261">
    <property type="entry name" value="Asp_decarbox"/>
    <property type="match status" value="1"/>
</dbReference>
<dbReference type="PIRSF" id="PIRSF006246">
    <property type="entry name" value="Asp_decarbox"/>
    <property type="match status" value="1"/>
</dbReference>
<dbReference type="SUPFAM" id="SSF50692">
    <property type="entry name" value="ADC-like"/>
    <property type="match status" value="1"/>
</dbReference>
<gene>
    <name evidence="1" type="primary">panD</name>
    <name type="ordered locus">GM21_1240</name>
</gene>
<protein>
    <recommendedName>
        <fullName evidence="1">Aspartate 1-decarboxylase</fullName>
        <ecNumber evidence="1">4.1.1.11</ecNumber>
    </recommendedName>
    <alternativeName>
        <fullName evidence="1">Aspartate alpha-decarboxylase</fullName>
    </alternativeName>
    <component>
        <recommendedName>
            <fullName evidence="1">Aspartate 1-decarboxylase beta chain</fullName>
        </recommendedName>
    </component>
    <component>
        <recommendedName>
            <fullName evidence="1">Aspartate 1-decarboxylase alpha chain</fullName>
        </recommendedName>
    </component>
</protein>
<accession>C6E3N6</accession>
<comment type="function">
    <text evidence="1">Catalyzes the pyruvoyl-dependent decarboxylation of aspartate to produce beta-alanine.</text>
</comment>
<comment type="catalytic activity">
    <reaction evidence="1">
        <text>L-aspartate + H(+) = beta-alanine + CO2</text>
        <dbReference type="Rhea" id="RHEA:19497"/>
        <dbReference type="ChEBI" id="CHEBI:15378"/>
        <dbReference type="ChEBI" id="CHEBI:16526"/>
        <dbReference type="ChEBI" id="CHEBI:29991"/>
        <dbReference type="ChEBI" id="CHEBI:57966"/>
        <dbReference type="EC" id="4.1.1.11"/>
    </reaction>
</comment>
<comment type="cofactor">
    <cofactor evidence="1">
        <name>pyruvate</name>
        <dbReference type="ChEBI" id="CHEBI:15361"/>
    </cofactor>
    <text evidence="1">Binds 1 pyruvoyl group covalently per subunit.</text>
</comment>
<comment type="pathway">
    <text evidence="1">Cofactor biosynthesis; (R)-pantothenate biosynthesis; beta-alanine from L-aspartate: step 1/1.</text>
</comment>
<comment type="subunit">
    <text evidence="1">Heterooctamer of four alpha and four beta subunits.</text>
</comment>
<comment type="subcellular location">
    <subcellularLocation>
        <location evidence="1">Cytoplasm</location>
    </subcellularLocation>
</comment>
<comment type="PTM">
    <text evidence="1">Is synthesized initially as an inactive proenzyme, which is activated by self-cleavage at a specific serine bond to produce a beta-subunit with a hydroxyl group at its C-terminus and an alpha-subunit with a pyruvoyl group at its N-terminus.</text>
</comment>
<comment type="similarity">
    <text evidence="1">Belongs to the PanD family.</text>
</comment>
<sequence>MERKMLKSKIHRATVTGADLHYEGSITIDLDLMEASDIIPYEAVCIWDVTNGSRFETYAIEGERGSGVICINGAAARLVAPQDLVIIASFVNMENAEAIAHEPKLVFVDDKNRMLESRKEVAGQATLKSVHWKN</sequence>
<name>PAND_GEOSM</name>
<feature type="chain" id="PRO_1000206180" description="Aspartate 1-decarboxylase beta chain" evidence="1">
    <location>
        <begin position="1"/>
        <end position="24"/>
    </location>
</feature>
<feature type="chain" id="PRO_1000206181" description="Aspartate 1-decarboxylase alpha chain" evidence="1">
    <location>
        <begin position="25"/>
        <end position="134"/>
    </location>
</feature>
<feature type="active site" description="Schiff-base intermediate with substrate; via pyruvic acid" evidence="1">
    <location>
        <position position="25"/>
    </location>
</feature>
<feature type="active site" description="Proton donor" evidence="1">
    <location>
        <position position="58"/>
    </location>
</feature>
<feature type="binding site" evidence="1">
    <location>
        <position position="57"/>
    </location>
    <ligand>
        <name>substrate</name>
    </ligand>
</feature>
<feature type="binding site" evidence="1">
    <location>
        <begin position="73"/>
        <end position="75"/>
    </location>
    <ligand>
        <name>substrate</name>
    </ligand>
</feature>
<feature type="modified residue" description="Pyruvic acid (Ser)" evidence="1">
    <location>
        <position position="25"/>
    </location>
</feature>
<organism>
    <name type="scientific">Geobacter sp. (strain M21)</name>
    <dbReference type="NCBI Taxonomy" id="443144"/>
    <lineage>
        <taxon>Bacteria</taxon>
        <taxon>Pseudomonadati</taxon>
        <taxon>Thermodesulfobacteriota</taxon>
        <taxon>Desulfuromonadia</taxon>
        <taxon>Geobacterales</taxon>
        <taxon>Geobacteraceae</taxon>
        <taxon>Geobacter</taxon>
    </lineage>
</organism>